<name>TDH_XANOM</name>
<accession>Q2NZP2</accession>
<organism>
    <name type="scientific">Xanthomonas oryzae pv. oryzae (strain MAFF 311018)</name>
    <dbReference type="NCBI Taxonomy" id="342109"/>
    <lineage>
        <taxon>Bacteria</taxon>
        <taxon>Pseudomonadati</taxon>
        <taxon>Pseudomonadota</taxon>
        <taxon>Gammaproteobacteria</taxon>
        <taxon>Lysobacterales</taxon>
        <taxon>Lysobacteraceae</taxon>
        <taxon>Xanthomonas</taxon>
    </lineage>
</organism>
<sequence length="340" mass="37125">MKALVKRETNKGIWLEQVPVPTPGPNEVLIKLEKTAICGTDLHIYLWDEWSQRTIKPGLTIGHEFVGRVAELGSAVTGYQVGQRVSAEGHIVCGHCRNCRGGRPHLCPNTMGIGVNVNGAFAEYMVMPASNLWPIPDQIPSELAAFFDPYGNAAHCALEFDVIGEDVLITGAGPIGIIAAGICKHIGARNVVVTDVNDFRLKLAADMGATRVVNVSKTSLKDVMADLHMEGFDVGLEMSGNPRAFNDMLDCMYHGGKIAMLGIMPRGAGCDWDKIIFKGLTVQGIYGRKMYETWYKMTQLVLSGFPLHKVLTHQLPIDDFQKGFDLMEAGKAGKVVLSWN</sequence>
<gene>
    <name evidence="1" type="primary">tdh</name>
    <name type="ordered locus">XOO3480</name>
</gene>
<dbReference type="EC" id="1.1.1.103" evidence="1"/>
<dbReference type="EMBL" id="AP008229">
    <property type="protein sequence ID" value="BAE70235.1"/>
    <property type="molecule type" value="Genomic_DNA"/>
</dbReference>
<dbReference type="SMR" id="Q2NZP2"/>
<dbReference type="KEGG" id="xom:XOO3480"/>
<dbReference type="HOGENOM" id="CLU_026673_11_0_6"/>
<dbReference type="UniPathway" id="UPA00046">
    <property type="reaction ID" value="UER00505"/>
</dbReference>
<dbReference type="GO" id="GO:0005737">
    <property type="term" value="C:cytoplasm"/>
    <property type="evidence" value="ECO:0007669"/>
    <property type="project" value="UniProtKB-SubCell"/>
</dbReference>
<dbReference type="GO" id="GO:0008743">
    <property type="term" value="F:L-threonine 3-dehydrogenase activity"/>
    <property type="evidence" value="ECO:0007669"/>
    <property type="project" value="UniProtKB-UniRule"/>
</dbReference>
<dbReference type="GO" id="GO:0008270">
    <property type="term" value="F:zinc ion binding"/>
    <property type="evidence" value="ECO:0007669"/>
    <property type="project" value="UniProtKB-UniRule"/>
</dbReference>
<dbReference type="GO" id="GO:0019518">
    <property type="term" value="P:L-threonine catabolic process to glycine"/>
    <property type="evidence" value="ECO:0007669"/>
    <property type="project" value="UniProtKB-UniPathway"/>
</dbReference>
<dbReference type="Gene3D" id="3.90.180.10">
    <property type="entry name" value="Medium-chain alcohol dehydrogenases, catalytic domain"/>
    <property type="match status" value="1"/>
</dbReference>
<dbReference type="Gene3D" id="3.40.50.720">
    <property type="entry name" value="NAD(P)-binding Rossmann-like Domain"/>
    <property type="match status" value="1"/>
</dbReference>
<dbReference type="HAMAP" id="MF_00627">
    <property type="entry name" value="Thr_dehydrog"/>
    <property type="match status" value="1"/>
</dbReference>
<dbReference type="InterPro" id="IPR013149">
    <property type="entry name" value="ADH-like_C"/>
</dbReference>
<dbReference type="InterPro" id="IPR013154">
    <property type="entry name" value="ADH-like_N"/>
</dbReference>
<dbReference type="InterPro" id="IPR002328">
    <property type="entry name" value="ADH_Zn_CS"/>
</dbReference>
<dbReference type="InterPro" id="IPR011032">
    <property type="entry name" value="GroES-like_sf"/>
</dbReference>
<dbReference type="InterPro" id="IPR004627">
    <property type="entry name" value="L-Threonine_3-DHase"/>
</dbReference>
<dbReference type="InterPro" id="IPR036291">
    <property type="entry name" value="NAD(P)-bd_dom_sf"/>
</dbReference>
<dbReference type="InterPro" id="IPR020843">
    <property type="entry name" value="PKS_ER"/>
</dbReference>
<dbReference type="InterPro" id="IPR050129">
    <property type="entry name" value="Zn_alcohol_dh"/>
</dbReference>
<dbReference type="NCBIfam" id="NF003808">
    <property type="entry name" value="PRK05396.1"/>
    <property type="match status" value="1"/>
</dbReference>
<dbReference type="NCBIfam" id="TIGR00692">
    <property type="entry name" value="tdh"/>
    <property type="match status" value="1"/>
</dbReference>
<dbReference type="PANTHER" id="PTHR43401">
    <property type="entry name" value="L-THREONINE 3-DEHYDROGENASE"/>
    <property type="match status" value="1"/>
</dbReference>
<dbReference type="PANTHER" id="PTHR43401:SF2">
    <property type="entry name" value="L-THREONINE 3-DEHYDROGENASE"/>
    <property type="match status" value="1"/>
</dbReference>
<dbReference type="Pfam" id="PF08240">
    <property type="entry name" value="ADH_N"/>
    <property type="match status" value="1"/>
</dbReference>
<dbReference type="Pfam" id="PF00107">
    <property type="entry name" value="ADH_zinc_N"/>
    <property type="match status" value="1"/>
</dbReference>
<dbReference type="SMART" id="SM00829">
    <property type="entry name" value="PKS_ER"/>
    <property type="match status" value="1"/>
</dbReference>
<dbReference type="SUPFAM" id="SSF50129">
    <property type="entry name" value="GroES-like"/>
    <property type="match status" value="1"/>
</dbReference>
<dbReference type="SUPFAM" id="SSF51735">
    <property type="entry name" value="NAD(P)-binding Rossmann-fold domains"/>
    <property type="match status" value="1"/>
</dbReference>
<dbReference type="PROSITE" id="PS00059">
    <property type="entry name" value="ADH_ZINC"/>
    <property type="match status" value="1"/>
</dbReference>
<keyword id="KW-0963">Cytoplasm</keyword>
<keyword id="KW-0479">Metal-binding</keyword>
<keyword id="KW-0520">NAD</keyword>
<keyword id="KW-0560">Oxidoreductase</keyword>
<keyword id="KW-0862">Zinc</keyword>
<proteinExistence type="inferred from homology"/>
<evidence type="ECO:0000255" key="1">
    <source>
        <dbReference type="HAMAP-Rule" id="MF_00627"/>
    </source>
</evidence>
<feature type="chain" id="PRO_1000051669" description="L-threonine 3-dehydrogenase">
    <location>
        <begin position="1"/>
        <end position="340"/>
    </location>
</feature>
<feature type="active site" description="Charge relay system" evidence="1">
    <location>
        <position position="40"/>
    </location>
</feature>
<feature type="active site" description="Charge relay system" evidence="1">
    <location>
        <position position="43"/>
    </location>
</feature>
<feature type="binding site" evidence="1">
    <location>
        <position position="38"/>
    </location>
    <ligand>
        <name>Zn(2+)</name>
        <dbReference type="ChEBI" id="CHEBI:29105"/>
        <label>1</label>
        <note>catalytic</note>
    </ligand>
</feature>
<feature type="binding site" evidence="1">
    <location>
        <position position="63"/>
    </location>
    <ligand>
        <name>Zn(2+)</name>
        <dbReference type="ChEBI" id="CHEBI:29105"/>
        <label>1</label>
        <note>catalytic</note>
    </ligand>
</feature>
<feature type="binding site" evidence="1">
    <location>
        <position position="64"/>
    </location>
    <ligand>
        <name>Zn(2+)</name>
        <dbReference type="ChEBI" id="CHEBI:29105"/>
        <label>1</label>
        <note>catalytic</note>
    </ligand>
</feature>
<feature type="binding site" evidence="1">
    <location>
        <position position="93"/>
    </location>
    <ligand>
        <name>Zn(2+)</name>
        <dbReference type="ChEBI" id="CHEBI:29105"/>
        <label>2</label>
    </ligand>
</feature>
<feature type="binding site" evidence="1">
    <location>
        <position position="96"/>
    </location>
    <ligand>
        <name>Zn(2+)</name>
        <dbReference type="ChEBI" id="CHEBI:29105"/>
        <label>2</label>
    </ligand>
</feature>
<feature type="binding site" evidence="1">
    <location>
        <position position="99"/>
    </location>
    <ligand>
        <name>Zn(2+)</name>
        <dbReference type="ChEBI" id="CHEBI:29105"/>
        <label>2</label>
    </ligand>
</feature>
<feature type="binding site" evidence="1">
    <location>
        <position position="107"/>
    </location>
    <ligand>
        <name>Zn(2+)</name>
        <dbReference type="ChEBI" id="CHEBI:29105"/>
        <label>2</label>
    </ligand>
</feature>
<feature type="binding site" evidence="1">
    <location>
        <position position="175"/>
    </location>
    <ligand>
        <name>NAD(+)</name>
        <dbReference type="ChEBI" id="CHEBI:57540"/>
    </ligand>
</feature>
<feature type="binding site" evidence="1">
    <location>
        <position position="195"/>
    </location>
    <ligand>
        <name>NAD(+)</name>
        <dbReference type="ChEBI" id="CHEBI:57540"/>
    </ligand>
</feature>
<feature type="binding site" evidence="1">
    <location>
        <position position="200"/>
    </location>
    <ligand>
        <name>NAD(+)</name>
        <dbReference type="ChEBI" id="CHEBI:57540"/>
    </ligand>
</feature>
<feature type="binding site" evidence="1">
    <location>
        <begin position="261"/>
        <end position="263"/>
    </location>
    <ligand>
        <name>NAD(+)</name>
        <dbReference type="ChEBI" id="CHEBI:57540"/>
    </ligand>
</feature>
<feature type="binding site" evidence="1">
    <location>
        <begin position="285"/>
        <end position="286"/>
    </location>
    <ligand>
        <name>NAD(+)</name>
        <dbReference type="ChEBI" id="CHEBI:57540"/>
    </ligand>
</feature>
<feature type="site" description="Important for catalytic activity for the proton relay mechanism but does not participate directly in the coordination of zinc atom" evidence="1">
    <location>
        <position position="148"/>
    </location>
</feature>
<protein>
    <recommendedName>
        <fullName evidence="1">L-threonine 3-dehydrogenase</fullName>
        <shortName evidence="1">TDH</shortName>
        <ecNumber evidence="1">1.1.1.103</ecNumber>
    </recommendedName>
</protein>
<reference key="1">
    <citation type="journal article" date="2005" name="Jpn. Agric. Res. Q.">
        <title>Genome sequence of Xanthomonas oryzae pv. oryzae suggests contribution of large numbers of effector genes and insertion sequences to its race diversity.</title>
        <authorList>
            <person name="Ochiai H."/>
            <person name="Inoue Y."/>
            <person name="Takeya M."/>
            <person name="Sasaki A."/>
            <person name="Kaku H."/>
        </authorList>
    </citation>
    <scope>NUCLEOTIDE SEQUENCE [LARGE SCALE GENOMIC DNA]</scope>
    <source>
        <strain>MAFF 311018</strain>
    </source>
</reference>
<comment type="function">
    <text evidence="1">Catalyzes the NAD(+)-dependent oxidation of L-threonine to 2-amino-3-ketobutyrate.</text>
</comment>
<comment type="catalytic activity">
    <reaction evidence="1">
        <text>L-threonine + NAD(+) = (2S)-2-amino-3-oxobutanoate + NADH + H(+)</text>
        <dbReference type="Rhea" id="RHEA:13161"/>
        <dbReference type="ChEBI" id="CHEBI:15378"/>
        <dbReference type="ChEBI" id="CHEBI:57540"/>
        <dbReference type="ChEBI" id="CHEBI:57926"/>
        <dbReference type="ChEBI" id="CHEBI:57945"/>
        <dbReference type="ChEBI" id="CHEBI:78948"/>
        <dbReference type="EC" id="1.1.1.103"/>
    </reaction>
</comment>
<comment type="cofactor">
    <cofactor evidence="1">
        <name>Zn(2+)</name>
        <dbReference type="ChEBI" id="CHEBI:29105"/>
    </cofactor>
    <text evidence="1">Binds 2 Zn(2+) ions per subunit.</text>
</comment>
<comment type="pathway">
    <text evidence="1">Amino-acid degradation; L-threonine degradation via oxydo-reductase pathway; glycine from L-threonine: step 1/2.</text>
</comment>
<comment type="subunit">
    <text evidence="1">Homotetramer.</text>
</comment>
<comment type="subcellular location">
    <subcellularLocation>
        <location evidence="1">Cytoplasm</location>
    </subcellularLocation>
</comment>
<comment type="similarity">
    <text evidence="1">Belongs to the zinc-containing alcohol dehydrogenase family.</text>
</comment>